<reference key="1">
    <citation type="journal article" date="2009" name="Genome Biol.">
        <title>Genomic and genetic analyses of diversity and plant interactions of Pseudomonas fluorescens.</title>
        <authorList>
            <person name="Silby M.W."/>
            <person name="Cerdeno-Tarraga A.M."/>
            <person name="Vernikos G.S."/>
            <person name="Giddens S.R."/>
            <person name="Jackson R.W."/>
            <person name="Preston G.M."/>
            <person name="Zhang X.-X."/>
            <person name="Moon C.D."/>
            <person name="Gehrig S.M."/>
            <person name="Godfrey S.A.C."/>
            <person name="Knight C.G."/>
            <person name="Malone J.G."/>
            <person name="Robinson Z."/>
            <person name="Spiers A.J."/>
            <person name="Harris S."/>
            <person name="Challis G.L."/>
            <person name="Yaxley A.M."/>
            <person name="Harris D."/>
            <person name="Seeger K."/>
            <person name="Murphy L."/>
            <person name="Rutter S."/>
            <person name="Squares R."/>
            <person name="Quail M.A."/>
            <person name="Saunders E."/>
            <person name="Mavromatis K."/>
            <person name="Brettin T.S."/>
            <person name="Bentley S.D."/>
            <person name="Hothersall J."/>
            <person name="Stephens E."/>
            <person name="Thomas C.M."/>
            <person name="Parkhill J."/>
            <person name="Levy S.B."/>
            <person name="Rainey P.B."/>
            <person name="Thomson N.R."/>
        </authorList>
    </citation>
    <scope>NUCLEOTIDE SEQUENCE [LARGE SCALE GENOMIC DNA]</scope>
    <source>
        <strain>SBW25</strain>
    </source>
</reference>
<gene>
    <name evidence="1" type="primary">rnc</name>
    <name type="ordered locus">PFLU_1060</name>
</gene>
<dbReference type="EC" id="3.1.26.3" evidence="1"/>
<dbReference type="EMBL" id="AM181176">
    <property type="protein sequence ID" value="CAY47324.1"/>
    <property type="molecule type" value="Genomic_DNA"/>
</dbReference>
<dbReference type="RefSeq" id="WP_012722401.1">
    <property type="nucleotide sequence ID" value="NC_012660.1"/>
</dbReference>
<dbReference type="SMR" id="C3K6Y7"/>
<dbReference type="STRING" id="294.SRM1_01039"/>
<dbReference type="GeneID" id="93462681"/>
<dbReference type="eggNOG" id="COG0571">
    <property type="taxonomic scope" value="Bacteria"/>
</dbReference>
<dbReference type="HOGENOM" id="CLU_000907_1_1_6"/>
<dbReference type="OrthoDB" id="9805026at2"/>
<dbReference type="GO" id="GO:0005737">
    <property type="term" value="C:cytoplasm"/>
    <property type="evidence" value="ECO:0007669"/>
    <property type="project" value="UniProtKB-SubCell"/>
</dbReference>
<dbReference type="GO" id="GO:0003725">
    <property type="term" value="F:double-stranded RNA binding"/>
    <property type="evidence" value="ECO:0007669"/>
    <property type="project" value="TreeGrafter"/>
</dbReference>
<dbReference type="GO" id="GO:0046872">
    <property type="term" value="F:metal ion binding"/>
    <property type="evidence" value="ECO:0007669"/>
    <property type="project" value="UniProtKB-KW"/>
</dbReference>
<dbReference type="GO" id="GO:0004525">
    <property type="term" value="F:ribonuclease III activity"/>
    <property type="evidence" value="ECO:0007669"/>
    <property type="project" value="UniProtKB-UniRule"/>
</dbReference>
<dbReference type="GO" id="GO:0019843">
    <property type="term" value="F:rRNA binding"/>
    <property type="evidence" value="ECO:0007669"/>
    <property type="project" value="UniProtKB-KW"/>
</dbReference>
<dbReference type="GO" id="GO:0006397">
    <property type="term" value="P:mRNA processing"/>
    <property type="evidence" value="ECO:0007669"/>
    <property type="project" value="UniProtKB-UniRule"/>
</dbReference>
<dbReference type="GO" id="GO:0010468">
    <property type="term" value="P:regulation of gene expression"/>
    <property type="evidence" value="ECO:0007669"/>
    <property type="project" value="TreeGrafter"/>
</dbReference>
<dbReference type="GO" id="GO:0006364">
    <property type="term" value="P:rRNA processing"/>
    <property type="evidence" value="ECO:0007669"/>
    <property type="project" value="UniProtKB-UniRule"/>
</dbReference>
<dbReference type="GO" id="GO:0008033">
    <property type="term" value="P:tRNA processing"/>
    <property type="evidence" value="ECO:0007669"/>
    <property type="project" value="UniProtKB-KW"/>
</dbReference>
<dbReference type="CDD" id="cd10845">
    <property type="entry name" value="DSRM_RNAse_III_family"/>
    <property type="match status" value="1"/>
</dbReference>
<dbReference type="CDD" id="cd00593">
    <property type="entry name" value="RIBOc"/>
    <property type="match status" value="1"/>
</dbReference>
<dbReference type="FunFam" id="1.10.1520.10:FF:000001">
    <property type="entry name" value="Ribonuclease 3"/>
    <property type="match status" value="1"/>
</dbReference>
<dbReference type="Gene3D" id="3.30.160.20">
    <property type="match status" value="1"/>
</dbReference>
<dbReference type="Gene3D" id="1.10.1520.10">
    <property type="entry name" value="Ribonuclease III domain"/>
    <property type="match status" value="1"/>
</dbReference>
<dbReference type="HAMAP" id="MF_00104">
    <property type="entry name" value="RNase_III"/>
    <property type="match status" value="1"/>
</dbReference>
<dbReference type="InterPro" id="IPR014720">
    <property type="entry name" value="dsRBD_dom"/>
</dbReference>
<dbReference type="InterPro" id="IPR011907">
    <property type="entry name" value="RNase_III"/>
</dbReference>
<dbReference type="InterPro" id="IPR000999">
    <property type="entry name" value="RNase_III_dom"/>
</dbReference>
<dbReference type="InterPro" id="IPR036389">
    <property type="entry name" value="RNase_III_sf"/>
</dbReference>
<dbReference type="NCBIfam" id="TIGR02191">
    <property type="entry name" value="RNaseIII"/>
    <property type="match status" value="1"/>
</dbReference>
<dbReference type="PANTHER" id="PTHR11207:SF0">
    <property type="entry name" value="RIBONUCLEASE 3"/>
    <property type="match status" value="1"/>
</dbReference>
<dbReference type="PANTHER" id="PTHR11207">
    <property type="entry name" value="RIBONUCLEASE III"/>
    <property type="match status" value="1"/>
</dbReference>
<dbReference type="Pfam" id="PF00035">
    <property type="entry name" value="dsrm"/>
    <property type="match status" value="1"/>
</dbReference>
<dbReference type="Pfam" id="PF14622">
    <property type="entry name" value="Ribonucleas_3_3"/>
    <property type="match status" value="1"/>
</dbReference>
<dbReference type="SMART" id="SM00358">
    <property type="entry name" value="DSRM"/>
    <property type="match status" value="1"/>
</dbReference>
<dbReference type="SMART" id="SM00535">
    <property type="entry name" value="RIBOc"/>
    <property type="match status" value="1"/>
</dbReference>
<dbReference type="SUPFAM" id="SSF54768">
    <property type="entry name" value="dsRNA-binding domain-like"/>
    <property type="match status" value="1"/>
</dbReference>
<dbReference type="SUPFAM" id="SSF69065">
    <property type="entry name" value="RNase III domain-like"/>
    <property type="match status" value="1"/>
</dbReference>
<dbReference type="PROSITE" id="PS50137">
    <property type="entry name" value="DS_RBD"/>
    <property type="match status" value="1"/>
</dbReference>
<dbReference type="PROSITE" id="PS00517">
    <property type="entry name" value="RNASE_3_1"/>
    <property type="match status" value="1"/>
</dbReference>
<dbReference type="PROSITE" id="PS50142">
    <property type="entry name" value="RNASE_3_2"/>
    <property type="match status" value="1"/>
</dbReference>
<proteinExistence type="inferred from homology"/>
<comment type="function">
    <text evidence="1">Digests double-stranded RNA. Involved in the processing of primary rRNA transcript to yield the immediate precursors to the large and small rRNAs (23S and 16S). Processes some mRNAs, and tRNAs when they are encoded in the rRNA operon. Processes pre-crRNA and tracrRNA of type II CRISPR loci if present in the organism.</text>
</comment>
<comment type="catalytic activity">
    <reaction evidence="1">
        <text>Endonucleolytic cleavage to 5'-phosphomonoester.</text>
        <dbReference type="EC" id="3.1.26.3"/>
    </reaction>
</comment>
<comment type="cofactor">
    <cofactor evidence="1">
        <name>Mg(2+)</name>
        <dbReference type="ChEBI" id="CHEBI:18420"/>
    </cofactor>
</comment>
<comment type="subunit">
    <text evidence="1">Homodimer.</text>
</comment>
<comment type="subcellular location">
    <subcellularLocation>
        <location evidence="1">Cytoplasm</location>
    </subcellularLocation>
</comment>
<comment type="similarity">
    <text evidence="1">Belongs to the ribonuclease III family.</text>
</comment>
<name>RNC_PSEFS</name>
<keyword id="KW-0963">Cytoplasm</keyword>
<keyword id="KW-0255">Endonuclease</keyword>
<keyword id="KW-0378">Hydrolase</keyword>
<keyword id="KW-0460">Magnesium</keyword>
<keyword id="KW-0479">Metal-binding</keyword>
<keyword id="KW-0507">mRNA processing</keyword>
<keyword id="KW-0540">Nuclease</keyword>
<keyword id="KW-0694">RNA-binding</keyword>
<keyword id="KW-0698">rRNA processing</keyword>
<keyword id="KW-0699">rRNA-binding</keyword>
<keyword id="KW-0819">tRNA processing</keyword>
<organism>
    <name type="scientific">Pseudomonas fluorescens (strain SBW25)</name>
    <dbReference type="NCBI Taxonomy" id="216595"/>
    <lineage>
        <taxon>Bacteria</taxon>
        <taxon>Pseudomonadati</taxon>
        <taxon>Pseudomonadota</taxon>
        <taxon>Gammaproteobacteria</taxon>
        <taxon>Pseudomonadales</taxon>
        <taxon>Pseudomonadaceae</taxon>
        <taxon>Pseudomonas</taxon>
    </lineage>
</organism>
<sequence length="229" mass="25383">MTVSLARLERQLGYTFKDQELMVLALTHRSFAGRNNERLEFLGDAILNFVAGEALFERFPQAREGQLSRLRARLVKGETLAVLARGFGLGEYLRLGSGELKSGGFRRESILADALEALIGAIYLDAGMEAAKERVTAWLTSEIESLTLVDTNKDPKTRLQEFLQSRGCELPRYEVVDIQGEPHCRVFFVECEITLLNEKSRGQGVSRRIAEQVAAAAALIALGVENGHD</sequence>
<feature type="chain" id="PRO_1000202842" description="Ribonuclease 3">
    <location>
        <begin position="1"/>
        <end position="229"/>
    </location>
</feature>
<feature type="domain" description="RNase III" evidence="1">
    <location>
        <begin position="5"/>
        <end position="127"/>
    </location>
</feature>
<feature type="domain" description="DRBM" evidence="1">
    <location>
        <begin position="154"/>
        <end position="224"/>
    </location>
</feature>
<feature type="active site" evidence="1">
    <location>
        <position position="44"/>
    </location>
</feature>
<feature type="active site" evidence="1">
    <location>
        <position position="116"/>
    </location>
</feature>
<feature type="binding site" evidence="1">
    <location>
        <position position="40"/>
    </location>
    <ligand>
        <name>Mg(2+)</name>
        <dbReference type="ChEBI" id="CHEBI:18420"/>
    </ligand>
</feature>
<feature type="binding site" evidence="1">
    <location>
        <position position="113"/>
    </location>
    <ligand>
        <name>Mg(2+)</name>
        <dbReference type="ChEBI" id="CHEBI:18420"/>
    </ligand>
</feature>
<feature type="binding site" evidence="1">
    <location>
        <position position="116"/>
    </location>
    <ligand>
        <name>Mg(2+)</name>
        <dbReference type="ChEBI" id="CHEBI:18420"/>
    </ligand>
</feature>
<protein>
    <recommendedName>
        <fullName evidence="1">Ribonuclease 3</fullName>
        <ecNumber evidence="1">3.1.26.3</ecNumber>
    </recommendedName>
    <alternativeName>
        <fullName evidence="1">Ribonuclease III</fullName>
        <shortName evidence="1">RNase III</shortName>
    </alternativeName>
</protein>
<evidence type="ECO:0000255" key="1">
    <source>
        <dbReference type="HAMAP-Rule" id="MF_00104"/>
    </source>
</evidence>
<accession>C3K6Y7</accession>